<name>PSBB_AMBTC</name>
<dbReference type="EMBL" id="AJ506156">
    <property type="protein sequence ID" value="CAD45132.1"/>
    <property type="molecule type" value="Genomic_DNA"/>
</dbReference>
<dbReference type="RefSeq" id="NP_904124.1">
    <property type="nucleotide sequence ID" value="NC_005086.1"/>
</dbReference>
<dbReference type="SMR" id="Q70XY1"/>
<dbReference type="STRING" id="13333.Q70XY1"/>
<dbReference type="GeneID" id="2546567"/>
<dbReference type="KEGG" id="atr:2546567"/>
<dbReference type="eggNOG" id="ENOG502QRV6">
    <property type="taxonomic scope" value="Eukaryota"/>
</dbReference>
<dbReference type="OrthoDB" id="375at2759"/>
<dbReference type="Proteomes" id="UP000017836">
    <property type="component" value="Chloroplast"/>
</dbReference>
<dbReference type="GO" id="GO:0009535">
    <property type="term" value="C:chloroplast thylakoid membrane"/>
    <property type="evidence" value="ECO:0007669"/>
    <property type="project" value="UniProtKB-SubCell"/>
</dbReference>
<dbReference type="GO" id="GO:0009523">
    <property type="term" value="C:photosystem II"/>
    <property type="evidence" value="ECO:0007669"/>
    <property type="project" value="UniProtKB-KW"/>
</dbReference>
<dbReference type="GO" id="GO:0016168">
    <property type="term" value="F:chlorophyll binding"/>
    <property type="evidence" value="ECO:0007669"/>
    <property type="project" value="UniProtKB-UniRule"/>
</dbReference>
<dbReference type="GO" id="GO:0045156">
    <property type="term" value="F:electron transporter, transferring electrons within the cyclic electron transport pathway of photosynthesis activity"/>
    <property type="evidence" value="ECO:0007669"/>
    <property type="project" value="InterPro"/>
</dbReference>
<dbReference type="GO" id="GO:0009772">
    <property type="term" value="P:photosynthetic electron transport in photosystem II"/>
    <property type="evidence" value="ECO:0007669"/>
    <property type="project" value="InterPro"/>
</dbReference>
<dbReference type="FunFam" id="3.10.680.10:FF:000001">
    <property type="entry name" value="Photosystem II CP47 reaction center protein"/>
    <property type="match status" value="1"/>
</dbReference>
<dbReference type="Gene3D" id="3.10.680.10">
    <property type="entry name" value="Photosystem II CP47 reaction center protein"/>
    <property type="match status" value="1"/>
</dbReference>
<dbReference type="HAMAP" id="MF_01495">
    <property type="entry name" value="PSII_PsbB_CP47"/>
    <property type="match status" value="1"/>
</dbReference>
<dbReference type="InterPro" id="IPR000932">
    <property type="entry name" value="PS_antenna-like"/>
</dbReference>
<dbReference type="InterPro" id="IPR036001">
    <property type="entry name" value="PS_II_antenna-like_sf"/>
</dbReference>
<dbReference type="InterPro" id="IPR017486">
    <property type="entry name" value="PSII_PsbB"/>
</dbReference>
<dbReference type="NCBIfam" id="TIGR03039">
    <property type="entry name" value="PS_II_CP47"/>
    <property type="match status" value="1"/>
</dbReference>
<dbReference type="PANTHER" id="PTHR33180">
    <property type="entry name" value="PHOTOSYSTEM II CP43 REACTION CENTER PROTEIN"/>
    <property type="match status" value="1"/>
</dbReference>
<dbReference type="PANTHER" id="PTHR33180:SF37">
    <property type="entry name" value="PHOTOSYSTEM II CP43 REACTION CENTER PROTEIN"/>
    <property type="match status" value="1"/>
</dbReference>
<dbReference type="Pfam" id="PF00421">
    <property type="entry name" value="PSII"/>
    <property type="match status" value="1"/>
</dbReference>
<dbReference type="SUPFAM" id="SSF161077">
    <property type="entry name" value="Photosystem II antenna protein-like"/>
    <property type="match status" value="1"/>
</dbReference>
<comment type="function">
    <text evidence="1">One of the components of the core complex of photosystem II (PSII). It binds chlorophyll and helps catalyze the primary light-induced photochemical processes of PSII. PSII is a light-driven water:plastoquinone oxidoreductase, using light energy to abstract electrons from H(2)O, generating O(2) and a proton gradient subsequently used for ATP formation.</text>
</comment>
<comment type="cofactor">
    <text evidence="1">Binds multiple chlorophylls. PSII binds additional chlorophylls, carotenoids and specific lipids.</text>
</comment>
<comment type="subunit">
    <text evidence="1">PSII is composed of 1 copy each of membrane proteins PsbA, PsbB, PsbC, PsbD, PsbE, PsbF, PsbH, PsbI, PsbJ, PsbK, PsbL, PsbM, PsbT, PsbX, PsbY, PsbZ, Psb30/Ycf12, at least 3 peripheral proteins of the oxygen-evolving complex and a large number of cofactors. It forms dimeric complexes.</text>
</comment>
<comment type="subcellular location">
    <subcellularLocation>
        <location evidence="1">Plastid</location>
        <location evidence="1">Chloroplast thylakoid membrane</location>
        <topology evidence="1">Multi-pass membrane protein</topology>
    </subcellularLocation>
</comment>
<comment type="similarity">
    <text evidence="1">Belongs to the PsbB/PsbC family. PsbB subfamily.</text>
</comment>
<sequence>MGLPWYRVHTVVLNDPGRLLSVHIMHTALVSGWAGSMALYELAVFDPSDPILDPMWRQGMFVIPFMTRLGITNSWGGWSITGGTVTNPGIWSYEGVAGAHIVFSGLCFLASIWHWVYWDLEIFCDERTGKPSLDLPKIFGIHLFLSGVACFGFGAFHVTGLYGPGIWVSDPYGLTGKVQSVNPAWGAEGFDPFVPGGIASHHIAAGTLGILAGLFHLSVRPPQRLYKGLRMGNIETVLSSSIAAVFFAAFIVAGTMWYGSATTPIELFGPTRYQWDQGYFQQEIYRRVGTGLAENLSLSEAWSKIPDKLAFYDYIGNNPAKGGLFRAGSMDNGDGIAVGWLGHPIFRDKEGHELFVRRMPTFFETFPVVLVDGDGIVRADVPFRRAESKYSVEQVGVTVEFYGGELNRVSYSDPATVKKYARRAQLGEIFELDRATLKSDGVFRSSPRGWFTFGHASFALLFFFGHIWHGARTLFRDVFAGIDPDLDAQVEFGAFQKIGDPTTRRQIV</sequence>
<protein>
    <recommendedName>
        <fullName evidence="1">Photosystem II CP47 reaction center protein</fullName>
    </recommendedName>
    <alternativeName>
        <fullName evidence="1">PSII 47 kDa protein</fullName>
    </alternativeName>
    <alternativeName>
        <fullName evidence="1">Protein CP-47</fullName>
    </alternativeName>
</protein>
<evidence type="ECO:0000255" key="1">
    <source>
        <dbReference type="HAMAP-Rule" id="MF_01495"/>
    </source>
</evidence>
<feature type="chain" id="PRO_0000359794" description="Photosystem II CP47 reaction center protein">
    <location>
        <begin position="1"/>
        <end position="508"/>
    </location>
</feature>
<feature type="transmembrane region" description="Helical" evidence="1">
    <location>
        <begin position="21"/>
        <end position="36"/>
    </location>
</feature>
<feature type="transmembrane region" description="Helical" evidence="1">
    <location>
        <begin position="101"/>
        <end position="115"/>
    </location>
</feature>
<feature type="transmembrane region" description="Helical" evidence="1">
    <location>
        <begin position="140"/>
        <end position="156"/>
    </location>
</feature>
<feature type="transmembrane region" description="Helical" evidence="1">
    <location>
        <begin position="203"/>
        <end position="218"/>
    </location>
</feature>
<feature type="transmembrane region" description="Helical" evidence="1">
    <location>
        <begin position="237"/>
        <end position="252"/>
    </location>
</feature>
<feature type="transmembrane region" description="Helical" evidence="1">
    <location>
        <begin position="457"/>
        <end position="472"/>
    </location>
</feature>
<reference key="1">
    <citation type="journal article" date="2003" name="Mol. Biol. Evol.">
        <title>Analysis of the Amborella trichopoda chloroplast genome sequence suggests that Amborella is not a basal angiosperm.</title>
        <authorList>
            <person name="Goremykin V.V."/>
            <person name="Hirsch-Ernst K.I."/>
            <person name="Wolfl S."/>
            <person name="Hellwig F.H."/>
        </authorList>
    </citation>
    <scope>NUCLEOTIDE SEQUENCE [LARGE SCALE GENOMIC DNA]</scope>
</reference>
<accession>Q70XY1</accession>
<geneLocation type="chloroplast"/>
<keyword id="KW-0148">Chlorophyll</keyword>
<keyword id="KW-0150">Chloroplast</keyword>
<keyword id="KW-0157">Chromophore</keyword>
<keyword id="KW-0472">Membrane</keyword>
<keyword id="KW-0602">Photosynthesis</keyword>
<keyword id="KW-0604">Photosystem II</keyword>
<keyword id="KW-0934">Plastid</keyword>
<keyword id="KW-1185">Reference proteome</keyword>
<keyword id="KW-0793">Thylakoid</keyword>
<keyword id="KW-0812">Transmembrane</keyword>
<keyword id="KW-1133">Transmembrane helix</keyword>
<organism>
    <name type="scientific">Amborella trichopoda</name>
    <dbReference type="NCBI Taxonomy" id="13333"/>
    <lineage>
        <taxon>Eukaryota</taxon>
        <taxon>Viridiplantae</taxon>
        <taxon>Streptophyta</taxon>
        <taxon>Embryophyta</taxon>
        <taxon>Tracheophyta</taxon>
        <taxon>Spermatophyta</taxon>
        <taxon>Magnoliopsida</taxon>
        <taxon>Amborellales</taxon>
        <taxon>Amborellaceae</taxon>
        <taxon>Amborella</taxon>
    </lineage>
</organism>
<gene>
    <name evidence="1" type="primary">psbB</name>
</gene>
<proteinExistence type="inferred from homology"/>